<feature type="chain" id="PRO_0000057763" description="Probable protein phosphatase 2C T23F11.1">
    <location>
        <begin position="1"/>
        <end position="356"/>
    </location>
</feature>
<feature type="domain" description="PPM-type phosphatase" evidence="2">
    <location>
        <begin position="23"/>
        <end position="286"/>
    </location>
</feature>
<feature type="region of interest" description="Disordered" evidence="3">
    <location>
        <begin position="336"/>
        <end position="356"/>
    </location>
</feature>
<feature type="binding site" evidence="1">
    <location>
        <position position="59"/>
    </location>
    <ligand>
        <name>Mn(2+)</name>
        <dbReference type="ChEBI" id="CHEBI:29035"/>
        <label>1</label>
    </ligand>
</feature>
<feature type="binding site" evidence="1">
    <location>
        <position position="59"/>
    </location>
    <ligand>
        <name>Mn(2+)</name>
        <dbReference type="ChEBI" id="CHEBI:29035"/>
        <label>2</label>
    </ligand>
</feature>
<feature type="binding site" evidence="1">
    <location>
        <position position="60"/>
    </location>
    <ligand>
        <name>Mn(2+)</name>
        <dbReference type="ChEBI" id="CHEBI:29035"/>
        <label>1</label>
    </ligand>
</feature>
<feature type="binding site" evidence="1">
    <location>
        <position position="228"/>
    </location>
    <ligand>
        <name>Mn(2+)</name>
        <dbReference type="ChEBI" id="CHEBI:29035"/>
        <label>2</label>
    </ligand>
</feature>
<feature type="binding site" evidence="1">
    <location>
        <position position="277"/>
    </location>
    <ligand>
        <name>Mn(2+)</name>
        <dbReference type="ChEBI" id="CHEBI:29035"/>
        <label>2</label>
    </ligand>
</feature>
<sequence length="356" mass="39064">MGQTLSEPVTKKESASCANENYLVGSSCMQGWRVDMEDAHTHLLSLPDDPKCAFFAVYDGHGGSKVSQYSGINLHKKVVAQKEFSEGNMKEAIEKGFLELDQQMRVDEETKDDVSGTTAVVVLIKEGDVYCGNAGDSRAVSSVVGEARPLSFDHKPSHETEARRIIAAGGWVEFNRVNGNLALSRALGDFAFKNCDTKPAEEQIVTAFPDVITDKLTPDHEFIVLACDGIWDVMTNQEVVDFVREKLAEKRDPQSICEELLTRCLAPDCQMGGLGCDNMTVVLVGLLHGQSPDTLFTKCARPAVFTGVNNEDGDQNQIQQDISRVINNFDGEQRVNAANQEEEEDDNEPAPANFQV</sequence>
<protein>
    <recommendedName>
        <fullName>Probable protein phosphatase 2C T23F11.1</fullName>
        <shortName>PP2C</shortName>
        <ecNumber>3.1.3.16</ecNumber>
    </recommendedName>
</protein>
<gene>
    <name type="primary">ppm-2</name>
    <name type="ORF">T23F11.1</name>
</gene>
<organism>
    <name type="scientific">Caenorhabditis elegans</name>
    <dbReference type="NCBI Taxonomy" id="6239"/>
    <lineage>
        <taxon>Eukaryota</taxon>
        <taxon>Metazoa</taxon>
        <taxon>Ecdysozoa</taxon>
        <taxon>Nematoda</taxon>
        <taxon>Chromadorea</taxon>
        <taxon>Rhabditida</taxon>
        <taxon>Rhabditina</taxon>
        <taxon>Rhabditomorpha</taxon>
        <taxon>Rhabditoidea</taxon>
        <taxon>Rhabditidae</taxon>
        <taxon>Peloderinae</taxon>
        <taxon>Caenorhabditis</taxon>
    </lineage>
</organism>
<proteinExistence type="inferred from homology"/>
<dbReference type="EC" id="3.1.3.16"/>
<dbReference type="EMBL" id="Z46343">
    <property type="protein sequence ID" value="CAA86456.2"/>
    <property type="molecule type" value="Genomic_DNA"/>
</dbReference>
<dbReference type="PIR" id="E88434">
    <property type="entry name" value="E88434"/>
</dbReference>
<dbReference type="PIR" id="T25181">
    <property type="entry name" value="T25181"/>
</dbReference>
<dbReference type="RefSeq" id="NP_001369858.1">
    <property type="nucleotide sequence ID" value="NM_001384078.2"/>
</dbReference>
<dbReference type="RefSeq" id="NP_497949.1">
    <property type="nucleotide sequence ID" value="NM_065548.5"/>
</dbReference>
<dbReference type="SMR" id="P49596"/>
<dbReference type="BioGRID" id="40846">
    <property type="interactions" value="8"/>
</dbReference>
<dbReference type="FunCoup" id="P49596">
    <property type="interactions" value="1256"/>
</dbReference>
<dbReference type="STRING" id="6239.T23F11.1.1"/>
<dbReference type="PaxDb" id="6239-T23F11.1.2"/>
<dbReference type="PeptideAtlas" id="P49596"/>
<dbReference type="EnsemblMetazoa" id="T23F11.1.1">
    <property type="protein sequence ID" value="T23F11.1.1"/>
    <property type="gene ID" value="WBGene00011953"/>
</dbReference>
<dbReference type="GeneID" id="175610"/>
<dbReference type="UCSC" id="T23F11.1.1">
    <property type="organism name" value="c. elegans"/>
</dbReference>
<dbReference type="AGR" id="WB:WBGene00011953"/>
<dbReference type="WormBase" id="T23F11.1">
    <property type="protein sequence ID" value="CE24009"/>
    <property type="gene ID" value="WBGene00011953"/>
    <property type="gene designation" value="ppm-2"/>
</dbReference>
<dbReference type="eggNOG" id="KOG0698">
    <property type="taxonomic scope" value="Eukaryota"/>
</dbReference>
<dbReference type="GeneTree" id="ENSGT00940000172210"/>
<dbReference type="HOGENOM" id="CLU_013173_4_2_1"/>
<dbReference type="InParanoid" id="P49596"/>
<dbReference type="OMA" id="CLLHDRP"/>
<dbReference type="OrthoDB" id="10264738at2759"/>
<dbReference type="PhylomeDB" id="P49596"/>
<dbReference type="PRO" id="PR:P49596"/>
<dbReference type="Proteomes" id="UP000001940">
    <property type="component" value="Chromosome III"/>
</dbReference>
<dbReference type="Bgee" id="WBGene00011953">
    <property type="expression patterns" value="Expressed in pharyngeal muscle cell (C elegans) and 4 other cell types or tissues"/>
</dbReference>
<dbReference type="GO" id="GO:0048786">
    <property type="term" value="C:presynaptic active zone"/>
    <property type="evidence" value="ECO:0000314"/>
    <property type="project" value="WormBase"/>
</dbReference>
<dbReference type="GO" id="GO:0046872">
    <property type="term" value="F:metal ion binding"/>
    <property type="evidence" value="ECO:0007669"/>
    <property type="project" value="UniProtKB-KW"/>
</dbReference>
<dbReference type="GO" id="GO:0004722">
    <property type="term" value="F:protein serine/threonine phosphatase activity"/>
    <property type="evidence" value="ECO:0007669"/>
    <property type="project" value="UniProtKB-EC"/>
</dbReference>
<dbReference type="GO" id="GO:0031625">
    <property type="term" value="F:ubiquitin protein ligase binding"/>
    <property type="evidence" value="ECO:0000353"/>
    <property type="project" value="WormBase"/>
</dbReference>
<dbReference type="GO" id="GO:0030517">
    <property type="term" value="P:negative regulation of axon extension"/>
    <property type="evidence" value="ECO:0000315"/>
    <property type="project" value="WormBase"/>
</dbReference>
<dbReference type="GO" id="GO:0051965">
    <property type="term" value="P:positive regulation of synapse assembly"/>
    <property type="evidence" value="ECO:0000315"/>
    <property type="project" value="WormBase"/>
</dbReference>
<dbReference type="GO" id="GO:0007165">
    <property type="term" value="P:signal transduction"/>
    <property type="evidence" value="ECO:0000318"/>
    <property type="project" value="GO_Central"/>
</dbReference>
<dbReference type="CDD" id="cd00143">
    <property type="entry name" value="PP2Cc"/>
    <property type="match status" value="1"/>
</dbReference>
<dbReference type="FunFam" id="3.60.40.10:FF:000016">
    <property type="entry name" value="Protein phosphatase 2C"/>
    <property type="match status" value="1"/>
</dbReference>
<dbReference type="Gene3D" id="3.60.40.10">
    <property type="entry name" value="PPM-type phosphatase domain"/>
    <property type="match status" value="1"/>
</dbReference>
<dbReference type="InterPro" id="IPR015655">
    <property type="entry name" value="PP2C"/>
</dbReference>
<dbReference type="InterPro" id="IPR000222">
    <property type="entry name" value="PP2C_BS"/>
</dbReference>
<dbReference type="InterPro" id="IPR036457">
    <property type="entry name" value="PPM-type-like_dom_sf"/>
</dbReference>
<dbReference type="InterPro" id="IPR001932">
    <property type="entry name" value="PPM-type_phosphatase-like_dom"/>
</dbReference>
<dbReference type="PANTHER" id="PTHR13832:SF565">
    <property type="entry name" value="AT28366P-RELATED"/>
    <property type="match status" value="1"/>
</dbReference>
<dbReference type="PANTHER" id="PTHR13832">
    <property type="entry name" value="PROTEIN PHOSPHATASE 2C"/>
    <property type="match status" value="1"/>
</dbReference>
<dbReference type="Pfam" id="PF00481">
    <property type="entry name" value="PP2C"/>
    <property type="match status" value="1"/>
</dbReference>
<dbReference type="SMART" id="SM00332">
    <property type="entry name" value="PP2Cc"/>
    <property type="match status" value="1"/>
</dbReference>
<dbReference type="SUPFAM" id="SSF81606">
    <property type="entry name" value="PP2C-like"/>
    <property type="match status" value="1"/>
</dbReference>
<dbReference type="PROSITE" id="PS01032">
    <property type="entry name" value="PPM_1"/>
    <property type="match status" value="1"/>
</dbReference>
<dbReference type="PROSITE" id="PS51746">
    <property type="entry name" value="PPM_2"/>
    <property type="match status" value="1"/>
</dbReference>
<evidence type="ECO:0000250" key="1"/>
<evidence type="ECO:0000255" key="2">
    <source>
        <dbReference type="PROSITE-ProRule" id="PRU01082"/>
    </source>
</evidence>
<evidence type="ECO:0000256" key="3">
    <source>
        <dbReference type="SAM" id="MobiDB-lite"/>
    </source>
</evidence>
<evidence type="ECO:0000305" key="4"/>
<reference key="1">
    <citation type="journal article" date="1998" name="Science">
        <title>Genome sequence of the nematode C. elegans: a platform for investigating biology.</title>
        <authorList>
            <consortium name="The C. elegans sequencing consortium"/>
        </authorList>
    </citation>
    <scope>NUCLEOTIDE SEQUENCE [LARGE SCALE GENOMIC DNA]</scope>
    <source>
        <strain>Bristol N2</strain>
    </source>
</reference>
<comment type="catalytic activity">
    <reaction>
        <text>O-phospho-L-seryl-[protein] + H2O = L-seryl-[protein] + phosphate</text>
        <dbReference type="Rhea" id="RHEA:20629"/>
        <dbReference type="Rhea" id="RHEA-COMP:9863"/>
        <dbReference type="Rhea" id="RHEA-COMP:11604"/>
        <dbReference type="ChEBI" id="CHEBI:15377"/>
        <dbReference type="ChEBI" id="CHEBI:29999"/>
        <dbReference type="ChEBI" id="CHEBI:43474"/>
        <dbReference type="ChEBI" id="CHEBI:83421"/>
        <dbReference type="EC" id="3.1.3.16"/>
    </reaction>
</comment>
<comment type="catalytic activity">
    <reaction>
        <text>O-phospho-L-threonyl-[protein] + H2O = L-threonyl-[protein] + phosphate</text>
        <dbReference type="Rhea" id="RHEA:47004"/>
        <dbReference type="Rhea" id="RHEA-COMP:11060"/>
        <dbReference type="Rhea" id="RHEA-COMP:11605"/>
        <dbReference type="ChEBI" id="CHEBI:15377"/>
        <dbReference type="ChEBI" id="CHEBI:30013"/>
        <dbReference type="ChEBI" id="CHEBI:43474"/>
        <dbReference type="ChEBI" id="CHEBI:61977"/>
        <dbReference type="EC" id="3.1.3.16"/>
    </reaction>
</comment>
<comment type="cofactor">
    <cofactor evidence="1">
        <name>Mg(2+)</name>
        <dbReference type="ChEBI" id="CHEBI:18420"/>
    </cofactor>
    <cofactor evidence="1">
        <name>Mn(2+)</name>
        <dbReference type="ChEBI" id="CHEBI:29035"/>
    </cofactor>
    <text evidence="1">Binds 2 magnesium or manganese ions per subunit.</text>
</comment>
<comment type="similarity">
    <text evidence="4">Belongs to the PP2C family.</text>
</comment>
<name>PP2C2_CAEEL</name>
<accession>P49596</accession>
<keyword id="KW-0378">Hydrolase</keyword>
<keyword id="KW-0460">Magnesium</keyword>
<keyword id="KW-0464">Manganese</keyword>
<keyword id="KW-0479">Metal-binding</keyword>
<keyword id="KW-0904">Protein phosphatase</keyword>
<keyword id="KW-1185">Reference proteome</keyword>